<protein>
    <recommendedName>
        <fullName>Lysophospholipid acyltransferase 5</fullName>
        <shortName>LPLAT 5</shortName>
        <ecNumber>2.3.1.-</ecNumber>
    </recommendedName>
    <alternativeName>
        <fullName>Probable 1-acylglycerophosphocholine O-acyltransferase</fullName>
        <ecNumber>2.3.1.23</ecNumber>
    </alternativeName>
    <alternativeName>
        <fullName>Probable 1-acylglycerophosphoethanolamine O-acyltransferase</fullName>
        <ecNumber>2.3.1.n7</ecNumber>
    </alternativeName>
    <alternativeName>
        <fullName>Probable 1-acylglycerophosphoserine O-acyltransferase</fullName>
        <ecNumber>2.3.1.n6</ecNumber>
    </alternativeName>
    <alternativeName>
        <fullName>Probable lysophosphatidylcholine acyltransferase</fullName>
        <shortName>LPCAT</shortName>
        <shortName>Lyso-PC acyltransferase</shortName>
    </alternativeName>
    <alternativeName>
        <fullName>Probable lysophosphatidylethanolamine acyltransferase</fullName>
        <shortName>LPEAT</shortName>
        <shortName>Lyso-PE acyltransferase</shortName>
    </alternativeName>
    <alternativeName>
        <fullName>Probable lysophosphatidylserine acyltransferase</fullName>
        <shortName>LPSAT</shortName>
        <shortName>Lyso-PS acyltransferase</shortName>
    </alternativeName>
</protein>
<evidence type="ECO:0000250" key="1"/>
<evidence type="ECO:0000255" key="2"/>
<evidence type="ECO:0000269" key="3">
    <source>
    </source>
</evidence>
<evidence type="ECO:0000305" key="4"/>
<feature type="chain" id="PRO_0000424900" description="Lysophospholipid acyltransferase 5">
    <location>
        <begin position="1"/>
        <end position="473"/>
    </location>
</feature>
<feature type="transmembrane region" description="Helical" evidence="2">
    <location>
        <begin position="20"/>
        <end position="40"/>
    </location>
</feature>
<feature type="transmembrane region" description="Helical" evidence="2">
    <location>
        <begin position="43"/>
        <end position="63"/>
    </location>
</feature>
<feature type="transmembrane region" description="Helical" evidence="2">
    <location>
        <begin position="66"/>
        <end position="86"/>
    </location>
</feature>
<feature type="transmembrane region" description="Helical" evidence="2">
    <location>
        <begin position="88"/>
        <end position="108"/>
    </location>
</feature>
<feature type="transmembrane region" description="Helical" evidence="2">
    <location>
        <begin position="341"/>
        <end position="361"/>
    </location>
</feature>
<feature type="transmembrane region" description="Helical" evidence="2">
    <location>
        <begin position="396"/>
        <end position="416"/>
    </location>
</feature>
<feature type="transmembrane region" description="Helical" evidence="2">
    <location>
        <begin position="431"/>
        <end position="451"/>
    </location>
</feature>
<feature type="short sequence motif" description="Di-lysine motif" evidence="1">
    <location>
        <begin position="470"/>
        <end position="473"/>
    </location>
</feature>
<feature type="active site" evidence="1">
    <location>
        <position position="315"/>
    </location>
</feature>
<feature type="active site" evidence="1">
    <location>
        <position position="351"/>
    </location>
</feature>
<feature type="splice variant" id="VSP_053557" description="In isoform b." evidence="4">
    <location>
        <begin position="1"/>
        <end position="132"/>
    </location>
</feature>
<reference key="1">
    <citation type="journal article" date="1998" name="Science">
        <title>Genome sequence of the nematode C. elegans: a platform for investigating biology.</title>
        <authorList>
            <consortium name="The C. elegans sequencing consortium"/>
        </authorList>
    </citation>
    <scope>NUCLEOTIDE SEQUENCE [LARGE SCALE GENOMIC DNA]</scope>
    <source>
        <strain>Bristol N2</strain>
    </source>
</reference>
<reference key="2">
    <citation type="journal article" date="2008" name="Genes Cells">
        <title>Member of the membrane-bound O-acyltransferase (MBOAT) family encodes a lysophospholipid acyltransferase with broad substrate specificity.</title>
        <authorList>
            <person name="Matsuda S."/>
            <person name="Inoue T."/>
            <person name="Lee H.C."/>
            <person name="Kono N."/>
            <person name="Tanaka F."/>
            <person name="Gengyo-Ando K."/>
            <person name="Mitani S."/>
            <person name="Arai H."/>
        </authorList>
    </citation>
    <scope>FUNCTION</scope>
    <scope>CATALYTIC ACTIVITY</scope>
    <scope>PATHWAY</scope>
</reference>
<gene>
    <name type="primary">mboa-6</name>
    <name type="ORF">R155.1</name>
</gene>
<name>MBOA5_CAEEL</name>
<organism>
    <name type="scientific">Caenorhabditis elegans</name>
    <dbReference type="NCBI Taxonomy" id="6239"/>
    <lineage>
        <taxon>Eukaryota</taxon>
        <taxon>Metazoa</taxon>
        <taxon>Ecdysozoa</taxon>
        <taxon>Nematoda</taxon>
        <taxon>Chromadorea</taxon>
        <taxon>Rhabditida</taxon>
        <taxon>Rhabditina</taxon>
        <taxon>Rhabditomorpha</taxon>
        <taxon>Rhabditoidea</taxon>
        <taxon>Rhabditidae</taxon>
        <taxon>Peloderinae</taxon>
        <taxon>Caenorhabditis</taxon>
    </lineage>
</organism>
<keyword id="KW-0012">Acyltransferase</keyword>
<keyword id="KW-0025">Alternative splicing</keyword>
<keyword id="KW-0256">Endoplasmic reticulum</keyword>
<keyword id="KW-0444">Lipid biosynthesis</keyword>
<keyword id="KW-0443">Lipid metabolism</keyword>
<keyword id="KW-0472">Membrane</keyword>
<keyword id="KW-0594">Phospholipid biosynthesis</keyword>
<keyword id="KW-1208">Phospholipid metabolism</keyword>
<keyword id="KW-1185">Reference proteome</keyword>
<keyword id="KW-0808">Transferase</keyword>
<keyword id="KW-0812">Transmembrane</keyword>
<keyword id="KW-1133">Transmembrane helix</keyword>
<dbReference type="EC" id="2.3.1.-"/>
<dbReference type="EC" id="2.3.1.23"/>
<dbReference type="EC" id="2.3.1.n7"/>
<dbReference type="EC" id="2.3.1.n6"/>
<dbReference type="EMBL" id="FO081449">
    <property type="protein sequence ID" value="CCD71668.1"/>
    <property type="molecule type" value="Genomic_DNA"/>
</dbReference>
<dbReference type="EMBL" id="FO081449">
    <property type="protein sequence ID" value="CCD71669.1"/>
    <property type="molecule type" value="Genomic_DNA"/>
</dbReference>
<dbReference type="PIR" id="T15281">
    <property type="entry name" value="T15281"/>
</dbReference>
<dbReference type="RefSeq" id="NP_001022735.1">
    <molecule id="O01925-1"/>
    <property type="nucleotide sequence ID" value="NM_001027564.7"/>
</dbReference>
<dbReference type="RefSeq" id="NP_001022736.1">
    <property type="nucleotide sequence ID" value="NM_001027565.3"/>
</dbReference>
<dbReference type="RefSeq" id="NP_001370746.1">
    <molecule id="O01925-2"/>
    <property type="nucleotide sequence ID" value="NM_001384035.2"/>
</dbReference>
<dbReference type="SMR" id="O01925"/>
<dbReference type="BioGRID" id="40593">
    <property type="interactions" value="3"/>
</dbReference>
<dbReference type="DIP" id="DIP-26801N"/>
<dbReference type="FunCoup" id="O01925">
    <property type="interactions" value="2001"/>
</dbReference>
<dbReference type="STRING" id="6239.R155.1a.1"/>
<dbReference type="PaxDb" id="6239-R155.1a"/>
<dbReference type="PeptideAtlas" id="O01925"/>
<dbReference type="EnsemblMetazoa" id="R155.1a.1">
    <molecule id="O01925-1"/>
    <property type="protein sequence ID" value="R155.1a.1"/>
    <property type="gene ID" value="WBGene00020115"/>
</dbReference>
<dbReference type="EnsemblMetazoa" id="R155.1b.1">
    <molecule id="O01925-2"/>
    <property type="protein sequence ID" value="R155.1b.1"/>
    <property type="gene ID" value="WBGene00020115"/>
</dbReference>
<dbReference type="EnsemblMetazoa" id="R155.1b.2">
    <molecule id="O01925-2"/>
    <property type="protein sequence ID" value="R155.1b.2"/>
    <property type="gene ID" value="WBGene00020115"/>
</dbReference>
<dbReference type="GeneID" id="175339"/>
<dbReference type="KEGG" id="cel:CELE_R155.1"/>
<dbReference type="UCSC" id="R155.1a.1">
    <property type="organism name" value="c. elegans"/>
</dbReference>
<dbReference type="AGR" id="WB:WBGene00020115"/>
<dbReference type="CTD" id="175339"/>
<dbReference type="WormBase" id="R155.1a">
    <molecule id="O01925-1"/>
    <property type="protein sequence ID" value="CE32713"/>
    <property type="gene ID" value="WBGene00020115"/>
    <property type="gene designation" value="mboa-6"/>
</dbReference>
<dbReference type="WormBase" id="R155.1b">
    <molecule id="O01925-2"/>
    <property type="protein sequence ID" value="CE33935"/>
    <property type="gene ID" value="WBGene00020115"/>
    <property type="gene designation" value="mboa-6"/>
</dbReference>
<dbReference type="eggNOG" id="KOG2705">
    <property type="taxonomic scope" value="Eukaryota"/>
</dbReference>
<dbReference type="GeneTree" id="ENSGT01030000234564"/>
<dbReference type="HOGENOM" id="CLU_011340_6_0_1"/>
<dbReference type="InParanoid" id="O01925"/>
<dbReference type="OMA" id="NAWVSRY"/>
<dbReference type="OrthoDB" id="5974730at2759"/>
<dbReference type="PhylomeDB" id="O01925"/>
<dbReference type="BRENDA" id="2.3.1.23">
    <property type="organism ID" value="1045"/>
</dbReference>
<dbReference type="Reactome" id="R-CEL-1482788">
    <property type="pathway name" value="Acyl chain remodelling of PC"/>
</dbReference>
<dbReference type="Reactome" id="R-CEL-1482801">
    <property type="pathway name" value="Acyl chain remodelling of PS"/>
</dbReference>
<dbReference type="Reactome" id="R-CEL-1482839">
    <property type="pathway name" value="Acyl chain remodelling of PE"/>
</dbReference>
<dbReference type="UniPathway" id="UPA00085"/>
<dbReference type="PRO" id="PR:O01925"/>
<dbReference type="Proteomes" id="UP000001940">
    <property type="component" value="Chromosome III"/>
</dbReference>
<dbReference type="Bgee" id="WBGene00020115">
    <property type="expression patterns" value="Expressed in pharyngeal muscle cell (C elegans) and 4 other cell types or tissues"/>
</dbReference>
<dbReference type="GO" id="GO:0005783">
    <property type="term" value="C:endoplasmic reticulum"/>
    <property type="evidence" value="ECO:0000250"/>
    <property type="project" value="WormBase"/>
</dbReference>
<dbReference type="GO" id="GO:0005789">
    <property type="term" value="C:endoplasmic reticulum membrane"/>
    <property type="evidence" value="ECO:0007669"/>
    <property type="project" value="UniProtKB-SubCell"/>
</dbReference>
<dbReference type="GO" id="GO:0016020">
    <property type="term" value="C:membrane"/>
    <property type="evidence" value="ECO:0000318"/>
    <property type="project" value="GO_Central"/>
</dbReference>
<dbReference type="GO" id="GO:0047184">
    <property type="term" value="F:1-acylglycerophosphocholine O-acyltransferase activity"/>
    <property type="evidence" value="ECO:0000318"/>
    <property type="project" value="GO_Central"/>
</dbReference>
<dbReference type="GO" id="GO:0106262">
    <property type="term" value="F:1-acylglycerophosphoethanolamine O-acyltransferase activity"/>
    <property type="evidence" value="ECO:0007669"/>
    <property type="project" value="RHEA"/>
</dbReference>
<dbReference type="GO" id="GO:0106263">
    <property type="term" value="F:1-acylglycerophosphoserine O-acyltransferase activity"/>
    <property type="evidence" value="ECO:0007669"/>
    <property type="project" value="RHEA"/>
</dbReference>
<dbReference type="GO" id="GO:0071617">
    <property type="term" value="F:lysophospholipid acyltransferase activity"/>
    <property type="evidence" value="ECO:0000318"/>
    <property type="project" value="GO_Central"/>
</dbReference>
<dbReference type="GO" id="GO:0008374">
    <property type="term" value="F:O-acyltransferase activity"/>
    <property type="evidence" value="ECO:0000250"/>
    <property type="project" value="WormBase"/>
</dbReference>
<dbReference type="GO" id="GO:0030258">
    <property type="term" value="P:lipid modification"/>
    <property type="evidence" value="ECO:0000318"/>
    <property type="project" value="GO_Central"/>
</dbReference>
<dbReference type="GO" id="GO:0002119">
    <property type="term" value="P:nematode larval development"/>
    <property type="evidence" value="ECO:0000315"/>
    <property type="project" value="WormBase"/>
</dbReference>
<dbReference type="GO" id="GO:0006656">
    <property type="term" value="P:phosphatidylcholine biosynthetic process"/>
    <property type="evidence" value="ECO:0000315"/>
    <property type="project" value="WormBase"/>
</dbReference>
<dbReference type="GO" id="GO:0036152">
    <property type="term" value="P:phosphatidylethanolamine acyl-chain remodeling"/>
    <property type="evidence" value="ECO:0000318"/>
    <property type="project" value="GO_Central"/>
</dbReference>
<dbReference type="GO" id="GO:0006646">
    <property type="term" value="P:phosphatidylethanolamine biosynthetic process"/>
    <property type="evidence" value="ECO:0000315"/>
    <property type="project" value="WormBase"/>
</dbReference>
<dbReference type="GO" id="GO:0006659">
    <property type="term" value="P:phosphatidylserine biosynthetic process"/>
    <property type="evidence" value="ECO:0000315"/>
    <property type="project" value="WormBase"/>
</dbReference>
<dbReference type="GO" id="GO:0040010">
    <property type="term" value="P:positive regulation of growth rate"/>
    <property type="evidence" value="ECO:0000315"/>
    <property type="project" value="WormBase"/>
</dbReference>
<dbReference type="GO" id="GO:0040032">
    <property type="term" value="P:post-embryonic body morphogenesis"/>
    <property type="evidence" value="ECO:0000315"/>
    <property type="project" value="WormBase"/>
</dbReference>
<dbReference type="InterPro" id="IPR049941">
    <property type="entry name" value="LPLAT_7/PORCN-like"/>
</dbReference>
<dbReference type="InterPro" id="IPR004299">
    <property type="entry name" value="MBOAT_fam"/>
</dbReference>
<dbReference type="PANTHER" id="PTHR13906:SF14">
    <property type="entry name" value="LYSOPHOSPHOLIPID ACYLTRANSFERASE 5"/>
    <property type="match status" value="1"/>
</dbReference>
<dbReference type="PANTHER" id="PTHR13906">
    <property type="entry name" value="PORCUPINE"/>
    <property type="match status" value="1"/>
</dbReference>
<dbReference type="Pfam" id="PF03062">
    <property type="entry name" value="MBOAT"/>
    <property type="match status" value="1"/>
</dbReference>
<accession>O01925</accession>
<accession>Q86DC4</accession>
<proteinExistence type="evidence at protein level"/>
<comment type="function">
    <text evidence="3">Probable acyltransferase which may mediate the conversion of lysophosphatidylcholine (1-acyl-sn-glycero-3-phosphocholine or LPC) into phosphatidylcholine (1,2-diacyl-sn-glycero-3-phosphocholine or PC) (LPCAT activity). May also catalyze the conversion of lysophosphatidylethanolamine (1-acyl-2-hydroxy-sn-glycero-3-phosphoethanolamine or LPE) into phosphatidylethanolamine (1,2-diacyl-sn-glycero-3-phosphoethanolamine or PE) (LPEAT activity), as well as the conversion of lysophosphatidylserine (1-acyl-2-hydroxy-sn-glycero-3-phospho-L-serine or LPS) into phosphatidylserine (1,2-diacyl-sn-glycero-3-phospho-L-serine or PS) (LPSAT activity). Required for incorporation of arachidonic acid into PC, PE, and PS.</text>
</comment>
<comment type="catalytic activity">
    <reaction evidence="3">
        <text>a 1-acyl-sn-glycero-3-phosphocholine + an acyl-CoA = a 1,2-diacyl-sn-glycero-3-phosphocholine + CoA</text>
        <dbReference type="Rhea" id="RHEA:12937"/>
        <dbReference type="ChEBI" id="CHEBI:57287"/>
        <dbReference type="ChEBI" id="CHEBI:57643"/>
        <dbReference type="ChEBI" id="CHEBI:58168"/>
        <dbReference type="ChEBI" id="CHEBI:58342"/>
        <dbReference type="EC" id="2.3.1.23"/>
    </reaction>
</comment>
<comment type="catalytic activity">
    <reaction evidence="3">
        <text>a 1-acyl-sn-glycero-3-phospho-L-serine + an acyl-CoA = a 1,2-diacyl-sn-glycero-3-phospho-L-serine + CoA</text>
        <dbReference type="Rhea" id="RHEA:33191"/>
        <dbReference type="ChEBI" id="CHEBI:57262"/>
        <dbReference type="ChEBI" id="CHEBI:57287"/>
        <dbReference type="ChEBI" id="CHEBI:58342"/>
        <dbReference type="ChEBI" id="CHEBI:64379"/>
        <dbReference type="EC" id="2.3.1.n6"/>
    </reaction>
</comment>
<comment type="catalytic activity">
    <reaction evidence="3">
        <text>a 1-acyl-sn-glycero-3-phosphoethanolamine + an acyl-CoA = a 1,2-diacyl-sn-glycero-3-phosphoethanolamine + CoA</text>
        <dbReference type="Rhea" id="RHEA:32995"/>
        <dbReference type="ChEBI" id="CHEBI:57287"/>
        <dbReference type="ChEBI" id="CHEBI:58342"/>
        <dbReference type="ChEBI" id="CHEBI:64381"/>
        <dbReference type="ChEBI" id="CHEBI:64612"/>
        <dbReference type="EC" id="2.3.1.n7"/>
    </reaction>
</comment>
<comment type="pathway">
    <text evidence="3">Lipid metabolism; phospholipid metabolism.</text>
</comment>
<comment type="subcellular location">
    <subcellularLocation>
        <location evidence="1">Endoplasmic reticulum membrane</location>
        <topology evidence="4">Multi-pass membrane protein</topology>
    </subcellularLocation>
</comment>
<comment type="alternative products">
    <event type="alternative splicing"/>
    <isoform>
        <id>O01925-1</id>
        <name>a</name>
        <sequence type="displayed"/>
    </isoform>
    <isoform>
        <id>O01925-2</id>
        <name>b</name>
        <sequence type="described" ref="VSP_053557"/>
    </isoform>
</comment>
<comment type="domain">
    <text evidence="1">The di-lysine motif may confer endoplasmic reticulum localization.</text>
</comment>
<comment type="similarity">
    <text evidence="4">Belongs to the membrane-bound acyltransferase family.</text>
</comment>
<sequence>MGVVGALSEVTSASEDALRLLISVLAGYPLAVVHRTFFYNKPAQHQHLFFVIVGLSLWMFNCGSSVIHPILSIFGAFFITNFMAGTDASIYAAHIVFLGHLLIGYWFHETDTYDITWTTPFCIMTLRFIGLVMDVYDGAQKPEHLKPDQKLTAISDKPGLLEIAAFGLFFQGTLVGPQFTLSKFRSFVNGDWLDSDGQPPKSAFLPSIGRFLAGCTYMVLHQWGQFWIPDQYFNSDAYNNLSFFWRWSWVTLWFRLTMYKYCAMWLITEGASILSGLGHNGKDAEGNDRWDGVRDLHIIKWETGHDYNSVVESFNCGTNTFAKNHIHRRLRWVNNKLASHVITLSYLAIWHGYHLGYFLLFGVELGCVQAQNQLYALIKRTPGWSEAISKPISRPFIWIFGKLTISYSMGFAFLMFGLIKTKYWIGPVKSLYFIGFIIYFIVWPILHMVLLRVLPRHPKKAAAEKPEEVKKEL</sequence>